<accession>Q90252</accession>
<organism>
    <name type="scientific">Rhinella marina</name>
    <name type="common">Cane toad</name>
    <name type="synonym">Bufo marinus</name>
    <dbReference type="NCBI Taxonomy" id="8386"/>
    <lineage>
        <taxon>Eukaryota</taxon>
        <taxon>Metazoa</taxon>
        <taxon>Chordata</taxon>
        <taxon>Craniata</taxon>
        <taxon>Vertebrata</taxon>
        <taxon>Euteleostomi</taxon>
        <taxon>Amphibia</taxon>
        <taxon>Batrachia</taxon>
        <taxon>Anura</taxon>
        <taxon>Neobatrachia</taxon>
        <taxon>Hyloidea</taxon>
        <taxon>Bufonidae</taxon>
        <taxon>Rhinella</taxon>
    </lineage>
</organism>
<dbReference type="EMBL" id="X93313">
    <property type="protein sequence ID" value="CAA63713.1"/>
    <property type="molecule type" value="mRNA"/>
</dbReference>
<dbReference type="PIR" id="S71336">
    <property type="entry name" value="S71336"/>
</dbReference>
<dbReference type="SMR" id="Q90252"/>
<dbReference type="GO" id="GO:0005886">
    <property type="term" value="C:plasma membrane"/>
    <property type="evidence" value="ECO:0007669"/>
    <property type="project" value="UniProtKB-SubCell"/>
</dbReference>
<dbReference type="GO" id="GO:0004990">
    <property type="term" value="F:oxytocin receptor activity"/>
    <property type="evidence" value="ECO:0007669"/>
    <property type="project" value="InterPro"/>
</dbReference>
<dbReference type="GO" id="GO:0042277">
    <property type="term" value="F:peptide binding"/>
    <property type="evidence" value="ECO:0007669"/>
    <property type="project" value="TreeGrafter"/>
</dbReference>
<dbReference type="GO" id="GO:0005000">
    <property type="term" value="F:vasopressin receptor activity"/>
    <property type="evidence" value="ECO:0007669"/>
    <property type="project" value="InterPro"/>
</dbReference>
<dbReference type="GO" id="GO:0032870">
    <property type="term" value="P:cellular response to hormone stimulus"/>
    <property type="evidence" value="ECO:0007669"/>
    <property type="project" value="TreeGrafter"/>
</dbReference>
<dbReference type="GO" id="GO:0060137">
    <property type="term" value="P:maternal process involved in parturition"/>
    <property type="evidence" value="ECO:0007669"/>
    <property type="project" value="TreeGrafter"/>
</dbReference>
<dbReference type="GO" id="GO:0045907">
    <property type="term" value="P:positive regulation of vasoconstriction"/>
    <property type="evidence" value="ECO:0007669"/>
    <property type="project" value="TreeGrafter"/>
</dbReference>
<dbReference type="GO" id="GO:0001992">
    <property type="term" value="P:regulation of systemic arterial blood pressure by vasopressin"/>
    <property type="evidence" value="ECO:0007669"/>
    <property type="project" value="TreeGrafter"/>
</dbReference>
<dbReference type="CDD" id="cd15387">
    <property type="entry name" value="7tmA_OT_R"/>
    <property type="match status" value="1"/>
</dbReference>
<dbReference type="FunFam" id="1.20.1070.10:FF:000145">
    <property type="entry name" value="Oxytocin receptor"/>
    <property type="match status" value="1"/>
</dbReference>
<dbReference type="Gene3D" id="1.20.1070.10">
    <property type="entry name" value="Rhodopsin 7-helix transmembrane proteins"/>
    <property type="match status" value="1"/>
</dbReference>
<dbReference type="InterPro" id="IPR000276">
    <property type="entry name" value="GPCR_Rhodpsn"/>
</dbReference>
<dbReference type="InterPro" id="IPR017452">
    <property type="entry name" value="GPCR_Rhodpsn_7TM"/>
</dbReference>
<dbReference type="InterPro" id="IPR002062">
    <property type="entry name" value="Oxytocn_rcpt"/>
</dbReference>
<dbReference type="InterPro" id="IPR001817">
    <property type="entry name" value="Vasoprsn_rcpt"/>
</dbReference>
<dbReference type="PANTHER" id="PTHR24241">
    <property type="entry name" value="NEUROPEPTIDE RECEPTOR-RELATED G-PROTEIN COUPLED RECEPTOR"/>
    <property type="match status" value="1"/>
</dbReference>
<dbReference type="PANTHER" id="PTHR24241:SF89">
    <property type="entry name" value="OXYTOCIN RECEPTOR"/>
    <property type="match status" value="1"/>
</dbReference>
<dbReference type="Pfam" id="PF00001">
    <property type="entry name" value="7tm_1"/>
    <property type="match status" value="1"/>
</dbReference>
<dbReference type="PRINTS" id="PR00237">
    <property type="entry name" value="GPCRRHODOPSN"/>
</dbReference>
<dbReference type="PRINTS" id="PR00665">
    <property type="entry name" value="OXYTOCINR"/>
</dbReference>
<dbReference type="PRINTS" id="PR00896">
    <property type="entry name" value="VASOPRESSINR"/>
</dbReference>
<dbReference type="SUPFAM" id="SSF81321">
    <property type="entry name" value="Family A G protein-coupled receptor-like"/>
    <property type="match status" value="1"/>
</dbReference>
<dbReference type="PROSITE" id="PS00237">
    <property type="entry name" value="G_PROTEIN_RECEP_F1_1"/>
    <property type="match status" value="1"/>
</dbReference>
<dbReference type="PROSITE" id="PS50262">
    <property type="entry name" value="G_PROTEIN_RECEP_F1_2"/>
    <property type="match status" value="1"/>
</dbReference>
<proteinExistence type="evidence at transcript level"/>
<comment type="function">
    <text>Binds to mesotocin and may play a role in the regulation of water and salt transport.</text>
</comment>
<comment type="subcellular location">
    <subcellularLocation>
        <location>Cell membrane</location>
        <topology>Multi-pass membrane protein</topology>
    </subcellularLocation>
</comment>
<comment type="tissue specificity">
    <text>Highly expressed in the bladder. Also expressed in kidney, brain and skeletal muscle.</text>
</comment>
<comment type="similarity">
    <text evidence="2">Belongs to the G-protein coupled receptor 1 family. Vasopressin/oxytocin receptor subfamily.</text>
</comment>
<feature type="chain" id="PRO_0000069882" description="Mesotocin receptor">
    <location>
        <begin position="1"/>
        <end position="389"/>
    </location>
</feature>
<feature type="topological domain" description="Extracellular" evidence="1">
    <location>
        <begin position="1"/>
        <end position="50"/>
    </location>
</feature>
<feature type="transmembrane region" description="Helical; Name=1" evidence="1">
    <location>
        <begin position="51"/>
        <end position="71"/>
    </location>
</feature>
<feature type="topological domain" description="Cytoplasmic" evidence="1">
    <location>
        <begin position="72"/>
        <end position="87"/>
    </location>
</feature>
<feature type="transmembrane region" description="Helical; Name=2" evidence="1">
    <location>
        <begin position="88"/>
        <end position="108"/>
    </location>
</feature>
<feature type="topological domain" description="Extracellular" evidence="1">
    <location>
        <begin position="109"/>
        <end position="119"/>
    </location>
</feature>
<feature type="transmembrane region" description="Helical; Name=3" evidence="1">
    <location>
        <begin position="120"/>
        <end position="140"/>
    </location>
</feature>
<feature type="topological domain" description="Cytoplasmic" evidence="1">
    <location>
        <begin position="141"/>
        <end position="159"/>
    </location>
</feature>
<feature type="transmembrane region" description="Helical; Name=4" evidence="1">
    <location>
        <begin position="160"/>
        <end position="180"/>
    </location>
</feature>
<feature type="topological domain" description="Extracellular" evidence="1">
    <location>
        <begin position="181"/>
        <end position="207"/>
    </location>
</feature>
<feature type="transmembrane region" description="Helical; Name=5" evidence="1">
    <location>
        <begin position="208"/>
        <end position="228"/>
    </location>
</feature>
<feature type="topological domain" description="Cytoplasmic" evidence="1">
    <location>
        <begin position="229"/>
        <end position="275"/>
    </location>
</feature>
<feature type="transmembrane region" description="Helical; Name=6" evidence="1">
    <location>
        <begin position="276"/>
        <end position="296"/>
    </location>
</feature>
<feature type="topological domain" description="Extracellular" evidence="1">
    <location>
        <begin position="297"/>
        <end position="308"/>
    </location>
</feature>
<feature type="transmembrane region" description="Helical; Name=7" evidence="1">
    <location>
        <begin position="309"/>
        <end position="329"/>
    </location>
</feature>
<feature type="topological domain" description="Cytoplasmic" evidence="1">
    <location>
        <begin position="330"/>
        <end position="389"/>
    </location>
</feature>
<feature type="region of interest" description="Disordered" evidence="3">
    <location>
        <begin position="360"/>
        <end position="389"/>
    </location>
</feature>
<feature type="glycosylation site" description="N-linked (GlcNAc...) asparagine" evidence="1">
    <location>
        <position position="15"/>
    </location>
</feature>
<feature type="glycosylation site" description="N-linked (GlcNAc...) asparagine" evidence="1">
    <location>
        <position position="20"/>
    </location>
</feature>
<feature type="glycosylation site" description="N-linked (GlcNAc...) asparagine" evidence="1">
    <location>
        <position position="27"/>
    </location>
</feature>
<feature type="glycosylation site" description="N-linked (GlcNAc...) asparagine" evidence="1">
    <location>
        <position position="31"/>
    </location>
</feature>
<feature type="disulfide bond" evidence="2">
    <location>
        <begin position="117"/>
        <end position="192"/>
    </location>
</feature>
<sequence>MEGLCLNLDCSELPNSSWVNSSMENQNHSSNSTRDPLKRNEEVAKVEVTVLALILFLALAGNICVLLGIYINRHKHSRMYFFMKHLSIADLVVAIFQVLPQLIWDITFRFYAPDLVCRLVTYLQVVGMFASTYMLLLMSLDRCLAICQPLRSLHRRSDCVYVLFTWILSFLLSTPQTVIFSLTEVGNGVYDCRADFIQPWGPKAYITWITLAVYIIPVMILSVCYGLISYKIWQNIRLKTVCESNLRLSTSRRATLSRVSSVRLISKAKIRTVKMTFIIVLAYIVCWTPFFFVQMWSVWDPNPPKEASLFIIAMLLGSLNSCCNPWIYMLFTGHLFHDLLQSFLCCSARYLKTQQQGSDLSASRKSNSSTFVLSRKSSSQKSITQPSTA</sequence>
<reference key="1">
    <citation type="journal article" date="1996" name="Eur. J. Biochem.">
        <title>Cloning and functional characterization of the amphibian mesotocin receptor, a member of the oxytocin/vasopressin receptor superfamily.</title>
        <authorList>
            <person name="Akhundova A."/>
            <person name="Getmanova E."/>
            <person name="Gorboulev V."/>
            <person name="Garnazzi E."/>
            <person name="Eggena P."/>
            <person name="Fahrenholz F."/>
        </authorList>
    </citation>
    <scope>NUCLEOTIDE SEQUENCE [MRNA]</scope>
    <source>
        <tissue>Urinary bladder</tissue>
    </source>
</reference>
<name>MTR_RHIMB</name>
<keyword id="KW-1003">Cell membrane</keyword>
<keyword id="KW-1015">Disulfide bond</keyword>
<keyword id="KW-0297">G-protein coupled receptor</keyword>
<keyword id="KW-0325">Glycoprotein</keyword>
<keyword id="KW-0472">Membrane</keyword>
<keyword id="KW-0675">Receptor</keyword>
<keyword id="KW-0807">Transducer</keyword>
<keyword id="KW-0812">Transmembrane</keyword>
<keyword id="KW-1133">Transmembrane helix</keyword>
<protein>
    <recommendedName>
        <fullName>Mesotocin receptor</fullName>
        <shortName>MTR</shortName>
    </recommendedName>
</protein>
<evidence type="ECO:0000255" key="1"/>
<evidence type="ECO:0000255" key="2">
    <source>
        <dbReference type="PROSITE-ProRule" id="PRU00521"/>
    </source>
</evidence>
<evidence type="ECO:0000256" key="3">
    <source>
        <dbReference type="SAM" id="MobiDB-lite"/>
    </source>
</evidence>